<comment type="function">
    <text evidence="2 10 11">Plays a role in the regulation of cell morphology and cytoskeletal organization. Required in the control of cell shape and migration. Required for developmental angiogenesis (By similarity). In this process, required for microtubule reorganization and for efficient endothelial cell elongation. In quiescent endothelial cells, triggers rearrangement of the actin cytoskeleton, but does not alter microtubule alignement.</text>
</comment>
<comment type="subunit">
    <text evidence="9">Interacts with SRGAP2 (via SH3 domain).</text>
</comment>
<comment type="interaction">
    <interactant intactId="EBI-12414373">
        <id>Q8IVF7-3</id>
    </interactant>
    <interactant intactId="EBI-12380931">
        <id>P36639-2</id>
        <label>NUDT1</label>
    </interactant>
    <organismsDiffer>false</organismsDiffer>
    <experiments>3</experiments>
</comment>
<comment type="subcellular location">
    <subcellularLocation>
        <location evidence="10">Cytoplasm</location>
    </subcellularLocation>
    <subcellularLocation>
        <location evidence="11">Cell membrane</location>
        <topology evidence="4">Lipid-anchor</topology>
    </subcellularLocation>
    <text>Enriched in lamellipodia.</text>
</comment>
<comment type="alternative products">
    <event type="alternative splicing"/>
    <isoform>
        <id>Q8IVF7-1</id>
        <name>1</name>
        <sequence type="displayed"/>
    </isoform>
    <isoform>
        <id>Q8IVF7-2</id>
        <name>2</name>
        <sequence type="described" ref="VSP_025892 VSP_025893"/>
    </isoform>
    <isoform>
        <id>Q8IVF7-3</id>
        <name>3</name>
        <sequence type="described" ref="VSP_025893"/>
    </isoform>
</comment>
<comment type="tissue specificity">
    <text evidence="11">Expressed in endothelial cells.</text>
</comment>
<comment type="domain">
    <text evidence="1">The DAD domain regulates activation via by an autoinhibitory interaction with the GBD/FH3 domain. This autoinhibition is released upon competitive binding of an activated GTPase. The release of DAD allows the FH2 domain to then nucleate and elongate nonbranched actin filaments (By similarity).</text>
</comment>
<comment type="similarity">
    <text evidence="15">Belongs to the formin homology family.</text>
</comment>
<comment type="sequence caution" evidence="15">
    <conflict type="erroneous initiation">
        <sequence resource="EMBL-CDS" id="BAC23110"/>
    </conflict>
</comment>
<organism>
    <name type="scientific">Homo sapiens</name>
    <name type="common">Human</name>
    <dbReference type="NCBI Taxonomy" id="9606"/>
    <lineage>
        <taxon>Eukaryota</taxon>
        <taxon>Metazoa</taxon>
        <taxon>Chordata</taxon>
        <taxon>Craniata</taxon>
        <taxon>Vertebrata</taxon>
        <taxon>Euteleostomi</taxon>
        <taxon>Mammalia</taxon>
        <taxon>Eutheria</taxon>
        <taxon>Euarchontoglires</taxon>
        <taxon>Primates</taxon>
        <taxon>Haplorrhini</taxon>
        <taxon>Catarrhini</taxon>
        <taxon>Hominidae</taxon>
        <taxon>Homo</taxon>
    </lineage>
</organism>
<dbReference type="EMBL" id="AB095934">
    <property type="protein sequence ID" value="BAC23110.2"/>
    <property type="status" value="ALT_INIT"/>
    <property type="molecule type" value="mRNA"/>
</dbReference>
<dbReference type="EMBL" id="AK128195">
    <property type="protein sequence ID" value="BAC87319.1"/>
    <property type="molecule type" value="mRNA"/>
</dbReference>
<dbReference type="EMBL" id="AC020612">
    <property type="status" value="NOT_ANNOTATED_CDS"/>
    <property type="molecule type" value="Genomic_DNA"/>
</dbReference>
<dbReference type="EMBL" id="BC159100">
    <property type="protein sequence ID" value="AAI59101.1"/>
    <property type="molecule type" value="mRNA"/>
</dbReference>
<dbReference type="CCDS" id="CCDS41780.1">
    <molecule id="Q8IVF7-2"/>
</dbReference>
<dbReference type="CCDS" id="CCDS44874.1">
    <molecule id="Q8IVF7-3"/>
</dbReference>
<dbReference type="RefSeq" id="NP_001354764.1">
    <molecule id="Q8IVF7-1"/>
    <property type="nucleotide sequence ID" value="NM_001367835.1"/>
</dbReference>
<dbReference type="RefSeq" id="NP_783863.4">
    <molecule id="Q8IVF7-3"/>
    <property type="nucleotide sequence ID" value="NM_175736.4"/>
</dbReference>
<dbReference type="RefSeq" id="NP_944489.2">
    <molecule id="Q8IVF7-2"/>
    <property type="nucleotide sequence ID" value="NM_198900.3"/>
</dbReference>
<dbReference type="RefSeq" id="XP_005269275.1">
    <property type="nucleotide sequence ID" value="XM_005269218.2"/>
</dbReference>
<dbReference type="SMR" id="Q8IVF7"/>
<dbReference type="BioGRID" id="124787">
    <property type="interactions" value="37"/>
</dbReference>
<dbReference type="FunCoup" id="Q8IVF7">
    <property type="interactions" value="2778"/>
</dbReference>
<dbReference type="IntAct" id="Q8IVF7">
    <property type="interactions" value="29"/>
</dbReference>
<dbReference type="MINT" id="Q8IVF7"/>
<dbReference type="STRING" id="9606.ENSP00000335655"/>
<dbReference type="GlyGen" id="Q8IVF7">
    <property type="glycosylation" value="3 sites, 1 O-linked glycan (3 sites)"/>
</dbReference>
<dbReference type="iPTMnet" id="Q8IVF7"/>
<dbReference type="PhosphoSitePlus" id="Q8IVF7"/>
<dbReference type="SwissPalm" id="Q8IVF7"/>
<dbReference type="BioMuta" id="FMNL3"/>
<dbReference type="DMDM" id="148886617"/>
<dbReference type="jPOST" id="Q8IVF7"/>
<dbReference type="MassIVE" id="Q8IVF7"/>
<dbReference type="PaxDb" id="9606-ENSP00000335655"/>
<dbReference type="PeptideAtlas" id="Q8IVF7"/>
<dbReference type="ProteomicsDB" id="70699">
    <molecule id="Q8IVF7-1"/>
</dbReference>
<dbReference type="ProteomicsDB" id="70700">
    <molecule id="Q8IVF7-2"/>
</dbReference>
<dbReference type="ProteomicsDB" id="70701">
    <molecule id="Q8IVF7-3"/>
</dbReference>
<dbReference type="Pumba" id="Q8IVF7"/>
<dbReference type="Antibodypedia" id="1106">
    <property type="antibodies" value="71 antibodies from 14 providers"/>
</dbReference>
<dbReference type="DNASU" id="91010"/>
<dbReference type="Ensembl" id="ENST00000335154.10">
    <molecule id="Q8IVF7-3"/>
    <property type="protein sequence ID" value="ENSP00000335655.5"/>
    <property type="gene ID" value="ENSG00000161791.14"/>
</dbReference>
<dbReference type="Ensembl" id="ENST00000352151.9">
    <molecule id="Q8IVF7-2"/>
    <property type="protein sequence ID" value="ENSP00000344311.5"/>
    <property type="gene ID" value="ENSG00000161791.14"/>
</dbReference>
<dbReference type="GeneID" id="91010"/>
<dbReference type="KEGG" id="hsa:91010"/>
<dbReference type="MANE-Select" id="ENST00000335154.10">
    <molecule id="Q8IVF7-3"/>
    <property type="protein sequence ID" value="ENSP00000335655.5"/>
    <property type="RefSeq nucleotide sequence ID" value="NM_175736.5"/>
    <property type="RefSeq protein sequence ID" value="NP_783863.4"/>
</dbReference>
<dbReference type="UCSC" id="uc001ruv.2">
    <molecule id="Q8IVF7-1"/>
    <property type="organism name" value="human"/>
</dbReference>
<dbReference type="AGR" id="HGNC:23698"/>
<dbReference type="CTD" id="91010"/>
<dbReference type="DisGeNET" id="91010"/>
<dbReference type="GeneCards" id="FMNL3"/>
<dbReference type="HGNC" id="HGNC:23698">
    <property type="gene designation" value="FMNL3"/>
</dbReference>
<dbReference type="HPA" id="ENSG00000161791">
    <property type="expression patterns" value="Low tissue specificity"/>
</dbReference>
<dbReference type="MIM" id="616288">
    <property type="type" value="gene"/>
</dbReference>
<dbReference type="neXtProt" id="NX_Q8IVF7"/>
<dbReference type="OpenTargets" id="ENSG00000161791"/>
<dbReference type="PharmGKB" id="PA134992328"/>
<dbReference type="VEuPathDB" id="HostDB:ENSG00000161791"/>
<dbReference type="eggNOG" id="KOG1923">
    <property type="taxonomic scope" value="Eukaryota"/>
</dbReference>
<dbReference type="GeneTree" id="ENSGT00940000159962"/>
<dbReference type="HOGENOM" id="CLU_003597_0_0_1"/>
<dbReference type="InParanoid" id="Q8IVF7"/>
<dbReference type="OMA" id="ELANFWH"/>
<dbReference type="OrthoDB" id="1104827at2759"/>
<dbReference type="PAN-GO" id="Q8IVF7">
    <property type="GO annotations" value="5 GO annotations based on evolutionary models"/>
</dbReference>
<dbReference type="PhylomeDB" id="Q8IVF7"/>
<dbReference type="TreeFam" id="TF325155"/>
<dbReference type="PathwayCommons" id="Q8IVF7"/>
<dbReference type="Reactome" id="R-HSA-5663220">
    <property type="pathway name" value="RHO GTPases Activate Formins"/>
</dbReference>
<dbReference type="Reactome" id="R-HSA-8980692">
    <property type="pathway name" value="RHOA GTPase cycle"/>
</dbReference>
<dbReference type="Reactome" id="R-HSA-9013106">
    <property type="pathway name" value="RHOC GTPase cycle"/>
</dbReference>
<dbReference type="Reactome" id="R-HSA-9013148">
    <property type="pathway name" value="CDC42 GTPase cycle"/>
</dbReference>
<dbReference type="Reactome" id="R-HSA-9013409">
    <property type="pathway name" value="RHOJ GTPase cycle"/>
</dbReference>
<dbReference type="SignaLink" id="Q8IVF7"/>
<dbReference type="BioGRID-ORCS" id="91010">
    <property type="hits" value="16 hits in 1155 CRISPR screens"/>
</dbReference>
<dbReference type="CD-CODE" id="FB4E32DD">
    <property type="entry name" value="Presynaptic clusters and postsynaptic densities"/>
</dbReference>
<dbReference type="ChiTaRS" id="FMNL3">
    <property type="organism name" value="human"/>
</dbReference>
<dbReference type="GeneWiki" id="FMNL3"/>
<dbReference type="GenomeRNAi" id="91010"/>
<dbReference type="Pharos" id="Q8IVF7">
    <property type="development level" value="Tbio"/>
</dbReference>
<dbReference type="PRO" id="PR:Q8IVF7"/>
<dbReference type="Proteomes" id="UP000005640">
    <property type="component" value="Chromosome 12"/>
</dbReference>
<dbReference type="RNAct" id="Q8IVF7">
    <property type="molecule type" value="protein"/>
</dbReference>
<dbReference type="Bgee" id="ENSG00000161791">
    <property type="expression patterns" value="Expressed in sural nerve and 138 other cell types or tissues"/>
</dbReference>
<dbReference type="ExpressionAtlas" id="Q8IVF7">
    <property type="expression patterns" value="baseline and differential"/>
</dbReference>
<dbReference type="GO" id="GO:0005737">
    <property type="term" value="C:cytoplasm"/>
    <property type="evidence" value="ECO:0000314"/>
    <property type="project" value="UniProtKB"/>
</dbReference>
<dbReference type="GO" id="GO:0005829">
    <property type="term" value="C:cytosol"/>
    <property type="evidence" value="ECO:0000314"/>
    <property type="project" value="HPA"/>
</dbReference>
<dbReference type="GO" id="GO:0005794">
    <property type="term" value="C:Golgi apparatus"/>
    <property type="evidence" value="ECO:0000314"/>
    <property type="project" value="HPA"/>
</dbReference>
<dbReference type="GO" id="GO:0043231">
    <property type="term" value="C:intracellular membrane-bounded organelle"/>
    <property type="evidence" value="ECO:0000314"/>
    <property type="project" value="HPA"/>
</dbReference>
<dbReference type="GO" id="GO:0005886">
    <property type="term" value="C:plasma membrane"/>
    <property type="evidence" value="ECO:0000314"/>
    <property type="project" value="HPA"/>
</dbReference>
<dbReference type="GO" id="GO:0051015">
    <property type="term" value="F:actin filament binding"/>
    <property type="evidence" value="ECO:0000318"/>
    <property type="project" value="GO_Central"/>
</dbReference>
<dbReference type="GO" id="GO:0032794">
    <property type="term" value="F:GTPase activating protein binding"/>
    <property type="evidence" value="ECO:0000250"/>
    <property type="project" value="UniProtKB"/>
</dbReference>
<dbReference type="GO" id="GO:0031267">
    <property type="term" value="F:small GTPase binding"/>
    <property type="evidence" value="ECO:0007669"/>
    <property type="project" value="InterPro"/>
</dbReference>
<dbReference type="GO" id="GO:0030036">
    <property type="term" value="P:actin cytoskeleton organization"/>
    <property type="evidence" value="ECO:0000315"/>
    <property type="project" value="BHF-UCL"/>
</dbReference>
<dbReference type="GO" id="GO:0001525">
    <property type="term" value="P:angiogenesis"/>
    <property type="evidence" value="ECO:0007669"/>
    <property type="project" value="UniProtKB-KW"/>
</dbReference>
<dbReference type="GO" id="GO:0016477">
    <property type="term" value="P:cell migration"/>
    <property type="evidence" value="ECO:0000315"/>
    <property type="project" value="UniProtKB"/>
</dbReference>
<dbReference type="GO" id="GO:0030866">
    <property type="term" value="P:cortical actin cytoskeleton organization"/>
    <property type="evidence" value="ECO:0000318"/>
    <property type="project" value="GO_Central"/>
</dbReference>
<dbReference type="GO" id="GO:0007010">
    <property type="term" value="P:cytoskeleton organization"/>
    <property type="evidence" value="ECO:0000315"/>
    <property type="project" value="UniProtKB"/>
</dbReference>
<dbReference type="GO" id="GO:0046847">
    <property type="term" value="P:filopodium assembly"/>
    <property type="evidence" value="ECO:0000314"/>
    <property type="project" value="BHF-UCL"/>
</dbReference>
<dbReference type="GO" id="GO:0008360">
    <property type="term" value="P:regulation of cell shape"/>
    <property type="evidence" value="ECO:0000315"/>
    <property type="project" value="UniProtKB"/>
</dbReference>
<dbReference type="FunFam" id="1.20.58.2220:FF:000001">
    <property type="entry name" value="Formin-like 1, isoform CRA_c"/>
    <property type="match status" value="1"/>
</dbReference>
<dbReference type="FunFam" id="1.25.10.10:FF:000036">
    <property type="entry name" value="Formin-like protein 3 isoform 1"/>
    <property type="match status" value="1"/>
</dbReference>
<dbReference type="FunFam" id="1.25.10.10:FF:000045">
    <property type="entry name" value="Formin-like protein 3 isoform 1"/>
    <property type="match status" value="1"/>
</dbReference>
<dbReference type="Gene3D" id="1.20.58.2220">
    <property type="entry name" value="Formin, FH2 domain"/>
    <property type="match status" value="1"/>
</dbReference>
<dbReference type="Gene3D" id="1.25.10.10">
    <property type="entry name" value="Leucine-rich Repeat Variant"/>
    <property type="match status" value="2"/>
</dbReference>
<dbReference type="InterPro" id="IPR011989">
    <property type="entry name" value="ARM-like"/>
</dbReference>
<dbReference type="InterPro" id="IPR016024">
    <property type="entry name" value="ARM-type_fold"/>
</dbReference>
<dbReference type="InterPro" id="IPR015425">
    <property type="entry name" value="FH2_Formin"/>
</dbReference>
<dbReference type="InterPro" id="IPR042201">
    <property type="entry name" value="FH2_Formin_sf"/>
</dbReference>
<dbReference type="InterPro" id="IPR010472">
    <property type="entry name" value="FH3_dom"/>
</dbReference>
<dbReference type="InterPro" id="IPR043592">
    <property type="entry name" value="FMNL_animal"/>
</dbReference>
<dbReference type="InterPro" id="IPR014768">
    <property type="entry name" value="GBD/FH3_dom"/>
</dbReference>
<dbReference type="InterPro" id="IPR010473">
    <property type="entry name" value="GTPase-bd"/>
</dbReference>
<dbReference type="PANTHER" id="PTHR45857">
    <property type="entry name" value="FORMIN-LIKE PROTEIN"/>
    <property type="match status" value="1"/>
</dbReference>
<dbReference type="PANTHER" id="PTHR45857:SF3">
    <property type="entry name" value="FORMIN-LIKE PROTEIN 3"/>
    <property type="match status" value="1"/>
</dbReference>
<dbReference type="Pfam" id="PF06367">
    <property type="entry name" value="Drf_FH3"/>
    <property type="match status" value="1"/>
</dbReference>
<dbReference type="Pfam" id="PF06371">
    <property type="entry name" value="Drf_GBD"/>
    <property type="match status" value="2"/>
</dbReference>
<dbReference type="Pfam" id="PF02181">
    <property type="entry name" value="FH2"/>
    <property type="match status" value="1"/>
</dbReference>
<dbReference type="SMART" id="SM01139">
    <property type="entry name" value="Drf_FH3"/>
    <property type="match status" value="1"/>
</dbReference>
<dbReference type="SMART" id="SM01140">
    <property type="entry name" value="Drf_GBD"/>
    <property type="match status" value="1"/>
</dbReference>
<dbReference type="SMART" id="SM00498">
    <property type="entry name" value="FH2"/>
    <property type="match status" value="1"/>
</dbReference>
<dbReference type="SUPFAM" id="SSF48371">
    <property type="entry name" value="ARM repeat"/>
    <property type="match status" value="1"/>
</dbReference>
<dbReference type="SUPFAM" id="SSF101447">
    <property type="entry name" value="Formin homology 2 domain (FH2 domain)"/>
    <property type="match status" value="1"/>
</dbReference>
<dbReference type="PROSITE" id="PS51444">
    <property type="entry name" value="FH2"/>
    <property type="match status" value="1"/>
</dbReference>
<dbReference type="PROSITE" id="PS51232">
    <property type="entry name" value="GBD_FH3"/>
    <property type="match status" value="1"/>
</dbReference>
<keyword id="KW-0025">Alternative splicing</keyword>
<keyword id="KW-0037">Angiogenesis</keyword>
<keyword id="KW-1003">Cell membrane</keyword>
<keyword id="KW-0963">Cytoplasm</keyword>
<keyword id="KW-0217">Developmental protein</keyword>
<keyword id="KW-0449">Lipoprotein</keyword>
<keyword id="KW-0472">Membrane</keyword>
<keyword id="KW-0519">Myristate</keyword>
<keyword id="KW-0597">Phosphoprotein</keyword>
<keyword id="KW-1267">Proteomics identification</keyword>
<keyword id="KW-1185">Reference proteome</keyword>
<gene>
    <name type="primary">FMNL3</name>
    <name type="synonym">FHOD3</name>
    <name type="synonym">FRL2</name>
    <name type="synonym">KIAA2014</name>
    <name type="synonym">WBP3</name>
</gene>
<protein>
    <recommendedName>
        <fullName>Formin-like protein 3</fullName>
    </recommendedName>
    <alternativeName>
        <fullName>Formin homology 2 domain-containing protein 3</fullName>
    </alternativeName>
    <alternativeName>
        <fullName>WW domain-binding protein 3</fullName>
        <shortName>WBP-3</shortName>
    </alternativeName>
</protein>
<name>FMNL3_HUMAN</name>
<evidence type="ECO:0000250" key="1"/>
<evidence type="ECO:0000250" key="2">
    <source>
        <dbReference type="UniProtKB" id="Q6NXC0"/>
    </source>
</evidence>
<evidence type="ECO:0000250" key="3">
    <source>
        <dbReference type="UniProtKB" id="Q6ZPF4"/>
    </source>
</evidence>
<evidence type="ECO:0000255" key="4"/>
<evidence type="ECO:0000255" key="5">
    <source>
        <dbReference type="PROSITE-ProRule" id="PRU00579"/>
    </source>
</evidence>
<evidence type="ECO:0000255" key="6">
    <source>
        <dbReference type="PROSITE-ProRule" id="PRU00774"/>
    </source>
</evidence>
<evidence type="ECO:0000256" key="7">
    <source>
        <dbReference type="SAM" id="MobiDB-lite"/>
    </source>
</evidence>
<evidence type="ECO:0000269" key="8">
    <source>
    </source>
</evidence>
<evidence type="ECO:0000269" key="9">
    <source>
    </source>
</evidence>
<evidence type="ECO:0000269" key="10">
    <source>
    </source>
</evidence>
<evidence type="ECO:0000269" key="11">
    <source>
    </source>
</evidence>
<evidence type="ECO:0000303" key="12">
    <source>
    </source>
</evidence>
<evidence type="ECO:0000303" key="13">
    <source>
    </source>
</evidence>
<evidence type="ECO:0000303" key="14">
    <source ref="1"/>
</evidence>
<evidence type="ECO:0000305" key="15"/>
<evidence type="ECO:0007744" key="16">
    <source>
    </source>
</evidence>
<accession>Q8IVF7</accession>
<accession>B0JZA7</accession>
<accession>Q6ZRJ1</accession>
<reference key="1">
    <citation type="submission" date="2002-11" db="EMBL/GenBank/DDBJ databases">
        <title>The nucleotide sequence of a long cDNA clone isolated from human.</title>
        <authorList>
            <person name="Nagase T."/>
            <person name="Kikuno R."/>
            <person name="Ohara O."/>
        </authorList>
    </citation>
    <scope>NUCLEOTIDE SEQUENCE [LARGE SCALE MRNA] (ISOFORM 3)</scope>
    <source>
        <tissue>Brain</tissue>
    </source>
</reference>
<reference key="2">
    <citation type="journal article" date="2004" name="Nat. Genet.">
        <title>Complete sequencing and characterization of 21,243 full-length human cDNAs.</title>
        <authorList>
            <person name="Ota T."/>
            <person name="Suzuki Y."/>
            <person name="Nishikawa T."/>
            <person name="Otsuki T."/>
            <person name="Sugiyama T."/>
            <person name="Irie R."/>
            <person name="Wakamatsu A."/>
            <person name="Hayashi K."/>
            <person name="Sato H."/>
            <person name="Nagai K."/>
            <person name="Kimura K."/>
            <person name="Makita H."/>
            <person name="Sekine M."/>
            <person name="Obayashi M."/>
            <person name="Nishi T."/>
            <person name="Shibahara T."/>
            <person name="Tanaka T."/>
            <person name="Ishii S."/>
            <person name="Yamamoto J."/>
            <person name="Saito K."/>
            <person name="Kawai Y."/>
            <person name="Isono Y."/>
            <person name="Nakamura Y."/>
            <person name="Nagahari K."/>
            <person name="Murakami K."/>
            <person name="Yasuda T."/>
            <person name="Iwayanagi T."/>
            <person name="Wagatsuma M."/>
            <person name="Shiratori A."/>
            <person name="Sudo H."/>
            <person name="Hosoiri T."/>
            <person name="Kaku Y."/>
            <person name="Kodaira H."/>
            <person name="Kondo H."/>
            <person name="Sugawara M."/>
            <person name="Takahashi M."/>
            <person name="Kanda K."/>
            <person name="Yokoi T."/>
            <person name="Furuya T."/>
            <person name="Kikkawa E."/>
            <person name="Omura Y."/>
            <person name="Abe K."/>
            <person name="Kamihara K."/>
            <person name="Katsuta N."/>
            <person name="Sato K."/>
            <person name="Tanikawa M."/>
            <person name="Yamazaki M."/>
            <person name="Ninomiya K."/>
            <person name="Ishibashi T."/>
            <person name="Yamashita H."/>
            <person name="Murakawa K."/>
            <person name="Fujimori K."/>
            <person name="Tanai H."/>
            <person name="Kimata M."/>
            <person name="Watanabe M."/>
            <person name="Hiraoka S."/>
            <person name="Chiba Y."/>
            <person name="Ishida S."/>
            <person name="Ono Y."/>
            <person name="Takiguchi S."/>
            <person name="Watanabe S."/>
            <person name="Yosida M."/>
            <person name="Hotuta T."/>
            <person name="Kusano J."/>
            <person name="Kanehori K."/>
            <person name="Takahashi-Fujii A."/>
            <person name="Hara H."/>
            <person name="Tanase T.-O."/>
            <person name="Nomura Y."/>
            <person name="Togiya S."/>
            <person name="Komai F."/>
            <person name="Hara R."/>
            <person name="Takeuchi K."/>
            <person name="Arita M."/>
            <person name="Imose N."/>
            <person name="Musashino K."/>
            <person name="Yuuki H."/>
            <person name="Oshima A."/>
            <person name="Sasaki N."/>
            <person name="Aotsuka S."/>
            <person name="Yoshikawa Y."/>
            <person name="Matsunawa H."/>
            <person name="Ichihara T."/>
            <person name="Shiohata N."/>
            <person name="Sano S."/>
            <person name="Moriya S."/>
            <person name="Momiyama H."/>
            <person name="Satoh N."/>
            <person name="Takami S."/>
            <person name="Terashima Y."/>
            <person name="Suzuki O."/>
            <person name="Nakagawa S."/>
            <person name="Senoh A."/>
            <person name="Mizoguchi H."/>
            <person name="Goto Y."/>
            <person name="Shimizu F."/>
            <person name="Wakebe H."/>
            <person name="Hishigaki H."/>
            <person name="Watanabe T."/>
            <person name="Sugiyama A."/>
            <person name="Takemoto M."/>
            <person name="Kawakami B."/>
            <person name="Yamazaki M."/>
            <person name="Watanabe K."/>
            <person name="Kumagai A."/>
            <person name="Itakura S."/>
            <person name="Fukuzumi Y."/>
            <person name="Fujimori Y."/>
            <person name="Komiyama M."/>
            <person name="Tashiro H."/>
            <person name="Tanigami A."/>
            <person name="Fujiwara T."/>
            <person name="Ono T."/>
            <person name="Yamada K."/>
            <person name="Fujii Y."/>
            <person name="Ozaki K."/>
            <person name="Hirao M."/>
            <person name="Ohmori Y."/>
            <person name="Kawabata A."/>
            <person name="Hikiji T."/>
            <person name="Kobatake N."/>
            <person name="Inagaki H."/>
            <person name="Ikema Y."/>
            <person name="Okamoto S."/>
            <person name="Okitani R."/>
            <person name="Kawakami T."/>
            <person name="Noguchi S."/>
            <person name="Itoh T."/>
            <person name="Shigeta K."/>
            <person name="Senba T."/>
            <person name="Matsumura K."/>
            <person name="Nakajima Y."/>
            <person name="Mizuno T."/>
            <person name="Morinaga M."/>
            <person name="Sasaki M."/>
            <person name="Togashi T."/>
            <person name="Oyama M."/>
            <person name="Hata H."/>
            <person name="Watanabe M."/>
            <person name="Komatsu T."/>
            <person name="Mizushima-Sugano J."/>
            <person name="Satoh T."/>
            <person name="Shirai Y."/>
            <person name="Takahashi Y."/>
            <person name="Nakagawa K."/>
            <person name="Okumura K."/>
            <person name="Nagase T."/>
            <person name="Nomura N."/>
            <person name="Kikuchi H."/>
            <person name="Masuho Y."/>
            <person name="Yamashita R."/>
            <person name="Nakai K."/>
            <person name="Yada T."/>
            <person name="Nakamura Y."/>
            <person name="Ohara O."/>
            <person name="Isogai T."/>
            <person name="Sugano S."/>
        </authorList>
    </citation>
    <scope>NUCLEOTIDE SEQUENCE [LARGE SCALE MRNA] (ISOFORM 2)</scope>
    <source>
        <tissue>Testis</tissue>
    </source>
</reference>
<reference key="3">
    <citation type="journal article" date="2006" name="Nature">
        <title>The finished DNA sequence of human chromosome 12.</title>
        <authorList>
            <person name="Scherer S.E."/>
            <person name="Muzny D.M."/>
            <person name="Buhay C.J."/>
            <person name="Chen R."/>
            <person name="Cree A."/>
            <person name="Ding Y."/>
            <person name="Dugan-Rocha S."/>
            <person name="Gill R."/>
            <person name="Gunaratne P."/>
            <person name="Harris R.A."/>
            <person name="Hawes A.C."/>
            <person name="Hernandez J."/>
            <person name="Hodgson A.V."/>
            <person name="Hume J."/>
            <person name="Jackson A."/>
            <person name="Khan Z.M."/>
            <person name="Kovar-Smith C."/>
            <person name="Lewis L.R."/>
            <person name="Lozado R.J."/>
            <person name="Metzker M.L."/>
            <person name="Milosavljevic A."/>
            <person name="Miner G.R."/>
            <person name="Montgomery K.T."/>
            <person name="Morgan M.B."/>
            <person name="Nazareth L.V."/>
            <person name="Scott G."/>
            <person name="Sodergren E."/>
            <person name="Song X.-Z."/>
            <person name="Steffen D."/>
            <person name="Lovering R.C."/>
            <person name="Wheeler D.A."/>
            <person name="Worley K.C."/>
            <person name="Yuan Y."/>
            <person name="Zhang Z."/>
            <person name="Adams C.Q."/>
            <person name="Ansari-Lari M.A."/>
            <person name="Ayele M."/>
            <person name="Brown M.J."/>
            <person name="Chen G."/>
            <person name="Chen Z."/>
            <person name="Clerc-Blankenburg K.P."/>
            <person name="Davis C."/>
            <person name="Delgado O."/>
            <person name="Dinh H.H."/>
            <person name="Draper H."/>
            <person name="Gonzalez-Garay M.L."/>
            <person name="Havlak P."/>
            <person name="Jackson L.R."/>
            <person name="Jacob L.S."/>
            <person name="Kelly S.H."/>
            <person name="Li L."/>
            <person name="Li Z."/>
            <person name="Liu J."/>
            <person name="Liu W."/>
            <person name="Lu J."/>
            <person name="Maheshwari M."/>
            <person name="Nguyen B.-V."/>
            <person name="Okwuonu G.O."/>
            <person name="Pasternak S."/>
            <person name="Perez L.M."/>
            <person name="Plopper F.J.H."/>
            <person name="Santibanez J."/>
            <person name="Shen H."/>
            <person name="Tabor P.E."/>
            <person name="Verduzco D."/>
            <person name="Waldron L."/>
            <person name="Wang Q."/>
            <person name="Williams G.A."/>
            <person name="Zhang J."/>
            <person name="Zhou J."/>
            <person name="Allen C.C."/>
            <person name="Amin A.G."/>
            <person name="Anyalebechi V."/>
            <person name="Bailey M."/>
            <person name="Barbaria J.A."/>
            <person name="Bimage K.E."/>
            <person name="Bryant N.P."/>
            <person name="Burch P.E."/>
            <person name="Burkett C.E."/>
            <person name="Burrell K.L."/>
            <person name="Calderon E."/>
            <person name="Cardenas V."/>
            <person name="Carter K."/>
            <person name="Casias K."/>
            <person name="Cavazos I."/>
            <person name="Cavazos S.R."/>
            <person name="Ceasar H."/>
            <person name="Chacko J."/>
            <person name="Chan S.N."/>
            <person name="Chavez D."/>
            <person name="Christopoulos C."/>
            <person name="Chu J."/>
            <person name="Cockrell R."/>
            <person name="Cox C.D."/>
            <person name="Dang M."/>
            <person name="Dathorne S.R."/>
            <person name="David R."/>
            <person name="Davis C.M."/>
            <person name="Davy-Carroll L."/>
            <person name="Deshazo D.R."/>
            <person name="Donlin J.E."/>
            <person name="D'Souza L."/>
            <person name="Eaves K.A."/>
            <person name="Egan A."/>
            <person name="Emery-Cohen A.J."/>
            <person name="Escotto M."/>
            <person name="Flagg N."/>
            <person name="Forbes L.D."/>
            <person name="Gabisi A.M."/>
            <person name="Garza M."/>
            <person name="Hamilton C."/>
            <person name="Henderson N."/>
            <person name="Hernandez O."/>
            <person name="Hines S."/>
            <person name="Hogues M.E."/>
            <person name="Huang M."/>
            <person name="Idlebird D.G."/>
            <person name="Johnson R."/>
            <person name="Jolivet A."/>
            <person name="Jones S."/>
            <person name="Kagan R."/>
            <person name="King L.M."/>
            <person name="Leal B."/>
            <person name="Lebow H."/>
            <person name="Lee S."/>
            <person name="LeVan J.M."/>
            <person name="Lewis L.C."/>
            <person name="London P."/>
            <person name="Lorensuhewa L.M."/>
            <person name="Loulseged H."/>
            <person name="Lovett D.A."/>
            <person name="Lucier A."/>
            <person name="Lucier R.L."/>
            <person name="Ma J."/>
            <person name="Madu R.C."/>
            <person name="Mapua P."/>
            <person name="Martindale A.D."/>
            <person name="Martinez E."/>
            <person name="Massey E."/>
            <person name="Mawhiney S."/>
            <person name="Meador M.G."/>
            <person name="Mendez S."/>
            <person name="Mercado C."/>
            <person name="Mercado I.C."/>
            <person name="Merritt C.E."/>
            <person name="Miner Z.L."/>
            <person name="Minja E."/>
            <person name="Mitchell T."/>
            <person name="Mohabbat F."/>
            <person name="Mohabbat K."/>
            <person name="Montgomery B."/>
            <person name="Moore N."/>
            <person name="Morris S."/>
            <person name="Munidasa M."/>
            <person name="Ngo R.N."/>
            <person name="Nguyen N.B."/>
            <person name="Nickerson E."/>
            <person name="Nwaokelemeh O.O."/>
            <person name="Nwokenkwo S."/>
            <person name="Obregon M."/>
            <person name="Oguh M."/>
            <person name="Oragunye N."/>
            <person name="Oviedo R.J."/>
            <person name="Parish B.J."/>
            <person name="Parker D.N."/>
            <person name="Parrish J."/>
            <person name="Parks K.L."/>
            <person name="Paul H.A."/>
            <person name="Payton B.A."/>
            <person name="Perez A."/>
            <person name="Perrin W."/>
            <person name="Pickens A."/>
            <person name="Primus E.L."/>
            <person name="Pu L.-L."/>
            <person name="Puazo M."/>
            <person name="Quiles M.M."/>
            <person name="Quiroz J.B."/>
            <person name="Rabata D."/>
            <person name="Reeves K."/>
            <person name="Ruiz S.J."/>
            <person name="Shao H."/>
            <person name="Sisson I."/>
            <person name="Sonaike T."/>
            <person name="Sorelle R.P."/>
            <person name="Sutton A.E."/>
            <person name="Svatek A.F."/>
            <person name="Svetz L.A."/>
            <person name="Tamerisa K.S."/>
            <person name="Taylor T.R."/>
            <person name="Teague B."/>
            <person name="Thomas N."/>
            <person name="Thorn R.D."/>
            <person name="Trejos Z.Y."/>
            <person name="Trevino B.K."/>
            <person name="Ukegbu O.N."/>
            <person name="Urban J.B."/>
            <person name="Vasquez L.I."/>
            <person name="Vera V.A."/>
            <person name="Villasana D.M."/>
            <person name="Wang L."/>
            <person name="Ward-Moore S."/>
            <person name="Warren J.T."/>
            <person name="Wei X."/>
            <person name="White F."/>
            <person name="Williamson A.L."/>
            <person name="Wleczyk R."/>
            <person name="Wooden H.S."/>
            <person name="Wooden S.H."/>
            <person name="Yen J."/>
            <person name="Yoon L."/>
            <person name="Yoon V."/>
            <person name="Zorrilla S.E."/>
            <person name="Nelson D."/>
            <person name="Kucherlapati R."/>
            <person name="Weinstock G."/>
            <person name="Gibbs R.A."/>
        </authorList>
    </citation>
    <scope>NUCLEOTIDE SEQUENCE [LARGE SCALE GENOMIC DNA]</scope>
</reference>
<reference key="4">
    <citation type="journal article" date="2004" name="Genome Res.">
        <title>The status, quality, and expansion of the NIH full-length cDNA project: the Mammalian Gene Collection (MGC).</title>
        <authorList>
            <consortium name="The MGC Project Team"/>
        </authorList>
    </citation>
    <scope>NUCLEOTIDE SEQUENCE [LARGE SCALE MRNA] (ISOFORM 3)</scope>
</reference>
<reference key="5">
    <citation type="journal article" date="2003" name="Int. J. Oncol.">
        <title>Identification and characterization of human FMNL1, FMNL2 and FMNL3 genes in silico.</title>
        <authorList>
            <person name="Katoh M."/>
            <person name="Katoh M."/>
        </authorList>
    </citation>
    <scope>IDENTIFICATION (ISOFORMS 1 AND 3)</scope>
</reference>
<reference key="6">
    <citation type="journal article" date="2008" name="Proc. Natl. Acad. Sci. U.S.A.">
        <title>A quantitative atlas of mitotic phosphorylation.</title>
        <authorList>
            <person name="Dephoure N."/>
            <person name="Zhou C."/>
            <person name="Villen J."/>
            <person name="Beausoleil S.A."/>
            <person name="Bakalarski C.E."/>
            <person name="Elledge S.J."/>
            <person name="Gygi S.P."/>
        </authorList>
    </citation>
    <scope>PHOSPHORYLATION [LARGE SCALE ANALYSIS] AT SER-174</scope>
    <scope>IDENTIFICATION BY MASS SPECTROMETRY [LARGE SCALE ANALYSIS]</scope>
    <source>
        <tissue>Cervix carcinoma</tissue>
    </source>
</reference>
<reference key="7">
    <citation type="journal article" date="2010" name="Proteomics">
        <title>Strategy for comprehensive identification of human N-myristoylated proteins using an insect cell-free protein synthesis system.</title>
        <authorList>
            <person name="Suzuki T."/>
            <person name="Moriya K."/>
            <person name="Nagatoshi K."/>
            <person name="Ota Y."/>
            <person name="Ezure T."/>
            <person name="Ando E."/>
            <person name="Tsunasawa S."/>
            <person name="Utsumi T."/>
        </authorList>
    </citation>
    <scope>MYRISTOYLATION AT GLY-2</scope>
</reference>
<reference key="8">
    <citation type="journal article" date="2011" name="BMC Biol.">
        <title>Identification and characterization of a set of conserved and new regulators of cytoskeletal organisation, cell morphology and migration.</title>
        <authorList>
            <person name="Bai S.W."/>
            <person name="Herrera-Abreu M.T."/>
            <person name="Rohn J.L."/>
            <person name="Racine V."/>
            <person name="Tajadura V."/>
            <person name="Suryavanshi N."/>
            <person name="Bechtel S."/>
            <person name="Wiemann S."/>
            <person name="Baum B."/>
            <person name="Ridley A.J."/>
        </authorList>
    </citation>
    <scope>FUNCTION</scope>
    <scope>SUBCELLULAR LOCATION</scope>
</reference>
<reference key="9">
    <citation type="journal article" date="2011" name="J. Biol. Chem.">
        <title>Bi-modal regulation of a formin by srGAP2.</title>
        <authorList>
            <person name="Mason F.M."/>
            <person name="Heimsath E.G."/>
            <person name="Higgs H.N."/>
            <person name="Soderling S.H."/>
        </authorList>
    </citation>
    <scope>INTERACTION WITH SRGAP2</scope>
</reference>
<reference key="10">
    <citation type="journal article" date="2012" name="J. Cell Sci.">
        <title>The formin FMNL3 is a cytoskeletal regulator of angiogenesis.</title>
        <authorList>
            <person name="Hetheridge C."/>
            <person name="Scott A.N."/>
            <person name="Swain R.K."/>
            <person name="Copeland J.W."/>
            <person name="Higgs H.N."/>
            <person name="Bicknell R."/>
            <person name="Mellor H."/>
        </authorList>
    </citation>
    <scope>FUNCTION</scope>
    <scope>TISSUE SPECIFICITY</scope>
    <scope>SUBCELLULAR LOCATION</scope>
</reference>
<proteinExistence type="evidence at protein level"/>
<sequence length="1028" mass="117213">MGNLESAEGVPGEPPSVPLLLPPGKMPMPEPCELEERFALVLSSMNLPPDKARLLRQYDNEKKWDLICDQERFQVKNPPHTYIQKLQSFLDPSVTRKKFRRRVQESTKVLRELEISLRTNHIGWVREFLNDENKGLDVLVDYLSFAQCSVMFDFEGLESGDDGAFDKLRSWSRSIEDLQPPSALSAPFTNSLARSARQSVLRYSTLPGRRALKNSRLVSQKDDVHVCILCLRAIMNYQYGFNLVMSHPHAVNEIALSLNNKNPRTKALVLELLAAVCLVRGGHEIILAAFDNFKEVCKELHRFEKLMEYFRNEDSNIDFMVACMQFINIVVHSVEDMNFRVHLQYEFTKLGLEEFLQKSRHTESEKLQVQIQAYLDNVFDVGGLLEDAETKNVALEKVEELEEHVSHLTEKLLDLENENMMRVAELEKQLLQREKELESIKETYENTSHQVHTLRRLIKEKEEAFQRRCHLEPNVRGLESVDSEALARVGPAELSEGMPPSDLDLLAPAPPPEEVLPLPPPPAPPLPPPPPPLPDKCPPAPPLPGAAPSVVLTVGLSAIRIKKPIKTKFRLPVFNWTALKPNQISGTVFSELDDEKILEDLDLDKFEELFKTKAQGPALDLICSKNKTAQKAASKVTLLEANRAKNLAITLRKAGRSAEEICRAIHTFDLQTLPVDFVECLMRFLPTEAEVKLLRQYERERQPLEELAAEDRFMLLFSKVERLTQRMAGMAFLGNFQDNLQMLTPQLNAIIAASASVKSSQKLKQMLEIILALGNYMNSSKRGAVYGFKLQSLDLLLDTKSTDRKMTLLHFIALTVKEKYPDLANFWHELHFVEKAAAVSLENVLLDVKELGRGMELIRRECSIHDNSVLRNFLSTNEGKLDKLQRDAKTAEEAYNAVVRYFGESPKTTPPSVFFPVFVRFIRSYKEAEQENEARKKQEEVMREKQLAQEAKKLDAKTPSQRNKWQQQELIAELRRRQAKEHRPVYEGKDGTIEDIITVLKSVPFTARTAKRGSRFFCDAAHHDESNC</sequence>
<feature type="initiator methionine" description="Removed">
    <location>
        <position position="1"/>
    </location>
</feature>
<feature type="chain" id="PRO_0000289095" description="Formin-like protein 3">
    <location>
        <begin position="2"/>
        <end position="1028"/>
    </location>
</feature>
<feature type="domain" description="GBD/FH3" evidence="5">
    <location>
        <begin position="26"/>
        <end position="472"/>
    </location>
</feature>
<feature type="domain" description="FH2" evidence="6">
    <location>
        <begin position="561"/>
        <end position="951"/>
    </location>
</feature>
<feature type="domain" description="DAD">
    <location>
        <begin position="986"/>
        <end position="1018"/>
    </location>
</feature>
<feature type="region of interest" description="Disordered" evidence="7">
    <location>
        <begin position="493"/>
        <end position="541"/>
    </location>
</feature>
<feature type="compositionally biased region" description="Pro residues" evidence="7">
    <location>
        <begin position="508"/>
        <end position="541"/>
    </location>
</feature>
<feature type="modified residue" description="Phosphothreonine" evidence="3">
    <location>
        <position position="95"/>
    </location>
</feature>
<feature type="modified residue" description="Phosphoserine" evidence="16">
    <location>
        <position position="174"/>
    </location>
</feature>
<feature type="modified residue" description="Phosphoserine" evidence="3">
    <location>
        <position position="1014"/>
    </location>
</feature>
<feature type="lipid moiety-binding region" description="N-myristoyl glycine" evidence="8">
    <location>
        <position position="2"/>
    </location>
</feature>
<feature type="splice variant" id="VSP_025892" description="In isoform 2." evidence="12">
    <location>
        <begin position="152"/>
        <end position="202"/>
    </location>
</feature>
<feature type="splice variant" id="VSP_025893" description="In isoform 3 and isoform 2." evidence="12 13 14">
    <original>VLKSVPFTARTAKRGSRFFCDAAHHDESNC</original>
    <variation>GLHCQPMVVRHQARSAAPPSGPPRAPGPH</variation>
    <location>
        <begin position="999"/>
        <end position="1028"/>
    </location>
</feature>